<keyword id="KW-0963">Cytoplasm</keyword>
<keyword id="KW-0448">Lipopolysaccharide biosynthesis</keyword>
<keyword id="KW-0808">Transferase</keyword>
<dbReference type="EC" id="2.5.1.55" evidence="1"/>
<dbReference type="EMBL" id="CP000680">
    <property type="protein sequence ID" value="ABP85788.1"/>
    <property type="molecule type" value="Genomic_DNA"/>
</dbReference>
<dbReference type="SMR" id="A4XWS2"/>
<dbReference type="STRING" id="399739.Pmen_3034"/>
<dbReference type="KEGG" id="pmy:Pmen_3034"/>
<dbReference type="eggNOG" id="COG2877">
    <property type="taxonomic scope" value="Bacteria"/>
</dbReference>
<dbReference type="HOGENOM" id="CLU_036666_0_0_6"/>
<dbReference type="OrthoDB" id="9776934at2"/>
<dbReference type="UniPathway" id="UPA00030"/>
<dbReference type="UniPathway" id="UPA00357">
    <property type="reaction ID" value="UER00474"/>
</dbReference>
<dbReference type="GO" id="GO:0005737">
    <property type="term" value="C:cytoplasm"/>
    <property type="evidence" value="ECO:0007669"/>
    <property type="project" value="UniProtKB-SubCell"/>
</dbReference>
<dbReference type="GO" id="GO:0008676">
    <property type="term" value="F:3-deoxy-8-phosphooctulonate synthase activity"/>
    <property type="evidence" value="ECO:0007669"/>
    <property type="project" value="UniProtKB-UniRule"/>
</dbReference>
<dbReference type="GO" id="GO:0019294">
    <property type="term" value="P:keto-3-deoxy-D-manno-octulosonic acid biosynthetic process"/>
    <property type="evidence" value="ECO:0007669"/>
    <property type="project" value="UniProtKB-UniRule"/>
</dbReference>
<dbReference type="FunFam" id="3.20.20.70:FF:000058">
    <property type="entry name" value="2-dehydro-3-deoxyphosphooctonate aldolase"/>
    <property type="match status" value="1"/>
</dbReference>
<dbReference type="Gene3D" id="3.20.20.70">
    <property type="entry name" value="Aldolase class I"/>
    <property type="match status" value="1"/>
</dbReference>
<dbReference type="HAMAP" id="MF_00056">
    <property type="entry name" value="KDO8P_synth"/>
    <property type="match status" value="1"/>
</dbReference>
<dbReference type="InterPro" id="IPR013785">
    <property type="entry name" value="Aldolase_TIM"/>
</dbReference>
<dbReference type="InterPro" id="IPR006218">
    <property type="entry name" value="DAHP1/KDSA"/>
</dbReference>
<dbReference type="InterPro" id="IPR006269">
    <property type="entry name" value="KDO8P_synthase"/>
</dbReference>
<dbReference type="NCBIfam" id="TIGR01362">
    <property type="entry name" value="KDO8P_synth"/>
    <property type="match status" value="1"/>
</dbReference>
<dbReference type="NCBIfam" id="NF003543">
    <property type="entry name" value="PRK05198.1"/>
    <property type="match status" value="1"/>
</dbReference>
<dbReference type="NCBIfam" id="NF009109">
    <property type="entry name" value="PRK12457.1"/>
    <property type="match status" value="1"/>
</dbReference>
<dbReference type="PANTHER" id="PTHR21057">
    <property type="entry name" value="PHOSPHO-2-DEHYDRO-3-DEOXYHEPTONATE ALDOLASE"/>
    <property type="match status" value="1"/>
</dbReference>
<dbReference type="Pfam" id="PF00793">
    <property type="entry name" value="DAHP_synth_1"/>
    <property type="match status" value="1"/>
</dbReference>
<dbReference type="SUPFAM" id="SSF51569">
    <property type="entry name" value="Aldolase"/>
    <property type="match status" value="1"/>
</dbReference>
<organism>
    <name type="scientific">Ectopseudomonas mendocina (strain ymp)</name>
    <name type="common">Pseudomonas mendocina</name>
    <dbReference type="NCBI Taxonomy" id="399739"/>
    <lineage>
        <taxon>Bacteria</taxon>
        <taxon>Pseudomonadati</taxon>
        <taxon>Pseudomonadota</taxon>
        <taxon>Gammaproteobacteria</taxon>
        <taxon>Pseudomonadales</taxon>
        <taxon>Pseudomonadaceae</taxon>
        <taxon>Ectopseudomonas</taxon>
    </lineage>
</organism>
<evidence type="ECO:0000255" key="1">
    <source>
        <dbReference type="HAMAP-Rule" id="MF_00056"/>
    </source>
</evidence>
<proteinExistence type="inferred from homology"/>
<comment type="catalytic activity">
    <reaction evidence="1">
        <text>D-arabinose 5-phosphate + phosphoenolpyruvate + H2O = 3-deoxy-alpha-D-manno-2-octulosonate-8-phosphate + phosphate</text>
        <dbReference type="Rhea" id="RHEA:14053"/>
        <dbReference type="ChEBI" id="CHEBI:15377"/>
        <dbReference type="ChEBI" id="CHEBI:43474"/>
        <dbReference type="ChEBI" id="CHEBI:57693"/>
        <dbReference type="ChEBI" id="CHEBI:58702"/>
        <dbReference type="ChEBI" id="CHEBI:85985"/>
        <dbReference type="EC" id="2.5.1.55"/>
    </reaction>
</comment>
<comment type="pathway">
    <text evidence="1">Carbohydrate biosynthesis; 3-deoxy-D-manno-octulosonate biosynthesis; 3-deoxy-D-manno-octulosonate from D-ribulose 5-phosphate: step 2/3.</text>
</comment>
<comment type="pathway">
    <text evidence="1">Bacterial outer membrane biogenesis; lipopolysaccharide biosynthesis.</text>
</comment>
<comment type="subcellular location">
    <subcellularLocation>
        <location evidence="1">Cytoplasm</location>
    </subcellularLocation>
</comment>
<comment type="similarity">
    <text evidence="1">Belongs to the KdsA family.</text>
</comment>
<feature type="chain" id="PRO_1000057397" description="2-dehydro-3-deoxyphosphooctonate aldolase">
    <location>
        <begin position="1"/>
        <end position="281"/>
    </location>
</feature>
<gene>
    <name evidence="1" type="primary">kdsA</name>
    <name type="ordered locus">Pmen_3034</name>
</gene>
<accession>A4XWS2</accession>
<reference key="1">
    <citation type="submission" date="2007-04" db="EMBL/GenBank/DDBJ databases">
        <title>Complete sequence of Pseudomonas mendocina ymp.</title>
        <authorList>
            <consortium name="US DOE Joint Genome Institute"/>
            <person name="Copeland A."/>
            <person name="Lucas S."/>
            <person name="Lapidus A."/>
            <person name="Barry K."/>
            <person name="Glavina del Rio T."/>
            <person name="Dalin E."/>
            <person name="Tice H."/>
            <person name="Pitluck S."/>
            <person name="Kiss H."/>
            <person name="Brettin T."/>
            <person name="Detter J.C."/>
            <person name="Bruce D."/>
            <person name="Han C."/>
            <person name="Schmutz J."/>
            <person name="Larimer F."/>
            <person name="Land M."/>
            <person name="Hauser L."/>
            <person name="Kyrpides N."/>
            <person name="Mikhailova N."/>
            <person name="Hersman L."/>
            <person name="Dubois J."/>
            <person name="Maurice P."/>
            <person name="Richardson P."/>
        </authorList>
    </citation>
    <scope>NUCLEOTIDE SEQUENCE [LARGE SCALE GENOMIC DNA]</scope>
    <source>
        <strain>ymp</strain>
    </source>
</reference>
<protein>
    <recommendedName>
        <fullName evidence="1">2-dehydro-3-deoxyphosphooctonate aldolase</fullName>
        <ecNumber evidence="1">2.5.1.55</ecNumber>
    </recommendedName>
    <alternativeName>
        <fullName evidence="1">3-deoxy-D-manno-octulosonic acid 8-phosphate synthase</fullName>
    </alternativeName>
    <alternativeName>
        <fullName evidence="1">KDO-8-phosphate synthase</fullName>
        <shortName evidence="1">KDO 8-P synthase</shortName>
        <shortName evidence="1">KDOPS</shortName>
    </alternativeName>
    <alternativeName>
        <fullName evidence="1">Phospho-2-dehydro-3-deoxyoctonate aldolase</fullName>
    </alternativeName>
</protein>
<sequence length="281" mass="30833">MAQKIIKVRDIEIANDKPFVLFGGINVLESRDLAMQACEEYVRVTEKLGIPYVFKASFDKANRSSITSFRGPGLEEGMKIFEEVKKTFGVPVITDVHEPHQAAAVAEVCDIIQLPAFLSRQTDLVVAMAKTGAVINIKKAQFLAPQEMKHILTKCEEAGNDQLILCERGSSFGYNNLVVDMLGFGIMKQFEYPVFFDVTHALQMPGGRADSAGGRRAQVTDLAKAGMSQGLAGLFLEAHPDPENAKCDGPCALRLNKLEPFLSQLKQLDDLVKSFPPIETA</sequence>
<name>KDSA_ECTM1</name>